<accession>P0C5D7</accession>
<accession>Q0IXS3</accession>
<accession>Q338E3</accession>
<accession>Q9SBW3</accession>
<reference key="1">
    <citation type="submission" date="1999-07" db="EMBL/GenBank/DDBJ databases">
        <title>Molecular cloning and characterization of protein phosphatase 2A catalytic subunit genes from Oryza sativa.</title>
        <authorList>
            <person name="Yu R.M.K."/>
            <person name="Kong R.Y.C."/>
        </authorList>
    </citation>
    <scope>NUCLEOTIDE SEQUENCE [GENOMIC DNA]</scope>
    <source>
        <strain>cv. IR36</strain>
    </source>
</reference>
<name>PP2A4_ORYSI</name>
<keyword id="KW-0963">Cytoplasm</keyword>
<keyword id="KW-0378">Hydrolase</keyword>
<keyword id="KW-0464">Manganese</keyword>
<keyword id="KW-0479">Metal-binding</keyword>
<keyword id="KW-0904">Protein phosphatase</keyword>
<proteinExistence type="inferred from homology"/>
<protein>
    <recommendedName>
        <fullName>Putative serine/threonine-protein phosphatase PP2A-4 catalytic subunit</fullName>
        <ecNumber>3.1.3.16</ecNumber>
    </recommendedName>
</protein>
<feature type="chain" id="PRO_0000301658" description="Putative serine/threonine-protein phosphatase PP2A-4 catalytic subunit">
    <location>
        <begin position="1"/>
        <end position="315"/>
    </location>
</feature>
<feature type="active site" description="Proton donor" evidence="1">
    <location>
        <position position="124"/>
    </location>
</feature>
<feature type="binding site" evidence="1">
    <location>
        <position position="63"/>
    </location>
    <ligand>
        <name>Mn(2+)</name>
        <dbReference type="ChEBI" id="CHEBI:29035"/>
        <label>1</label>
    </ligand>
</feature>
<feature type="binding site" evidence="1">
    <location>
        <position position="65"/>
    </location>
    <ligand>
        <name>Mn(2+)</name>
        <dbReference type="ChEBI" id="CHEBI:29035"/>
        <label>1</label>
    </ligand>
</feature>
<feature type="binding site" evidence="1">
    <location>
        <position position="91"/>
    </location>
    <ligand>
        <name>Mn(2+)</name>
        <dbReference type="ChEBI" id="CHEBI:29035"/>
        <label>1</label>
    </ligand>
</feature>
<feature type="binding site" evidence="1">
    <location>
        <position position="91"/>
    </location>
    <ligand>
        <name>Mn(2+)</name>
        <dbReference type="ChEBI" id="CHEBI:29035"/>
        <label>2</label>
    </ligand>
</feature>
<feature type="binding site" evidence="1">
    <location>
        <position position="123"/>
    </location>
    <ligand>
        <name>Mn(2+)</name>
        <dbReference type="ChEBI" id="CHEBI:29035"/>
        <label>2</label>
    </ligand>
</feature>
<feature type="binding site" evidence="1">
    <location>
        <position position="173"/>
    </location>
    <ligand>
        <name>Mn(2+)</name>
        <dbReference type="ChEBI" id="CHEBI:29035"/>
        <label>2</label>
    </ligand>
</feature>
<feature type="binding site" evidence="1">
    <location>
        <position position="247"/>
    </location>
    <ligand>
        <name>Mn(2+)</name>
        <dbReference type="ChEBI" id="CHEBI:29035"/>
        <label>2</label>
    </ligand>
</feature>
<dbReference type="EC" id="3.1.3.16"/>
<dbReference type="EMBL" id="AF173881">
    <property type="protein sequence ID" value="AAD48068.1"/>
    <property type="molecule type" value="Genomic_DNA"/>
</dbReference>
<dbReference type="SMR" id="P0C5D7"/>
<dbReference type="EnsemblPlants" id="BGIOSGA040481-TA">
    <property type="protein sequence ID" value="BGIOSGA040481-PA"/>
    <property type="gene ID" value="BGIOSGA040481"/>
</dbReference>
<dbReference type="Gramene" id="BGIOSGA040481-TA">
    <property type="protein sequence ID" value="BGIOSGA040481-PA"/>
    <property type="gene ID" value="BGIOSGA040481"/>
</dbReference>
<dbReference type="HOGENOM" id="CLU_004962_8_1_1"/>
<dbReference type="OMA" id="ICEPNIK"/>
<dbReference type="GO" id="GO:0005737">
    <property type="term" value="C:cytoplasm"/>
    <property type="evidence" value="ECO:0007669"/>
    <property type="project" value="UniProtKB-SubCell"/>
</dbReference>
<dbReference type="GO" id="GO:0046872">
    <property type="term" value="F:metal ion binding"/>
    <property type="evidence" value="ECO:0007669"/>
    <property type="project" value="UniProtKB-KW"/>
</dbReference>
<dbReference type="GO" id="GO:0004722">
    <property type="term" value="F:protein serine/threonine phosphatase activity"/>
    <property type="evidence" value="ECO:0007669"/>
    <property type="project" value="UniProtKB-EC"/>
</dbReference>
<dbReference type="CDD" id="cd07415">
    <property type="entry name" value="MPP_PP2A_PP4_PP6"/>
    <property type="match status" value="1"/>
</dbReference>
<dbReference type="FunFam" id="3.60.21.10:FF:000003">
    <property type="entry name" value="Serine/threonine-protein phosphatase"/>
    <property type="match status" value="1"/>
</dbReference>
<dbReference type="Gene3D" id="3.60.21.10">
    <property type="match status" value="1"/>
</dbReference>
<dbReference type="InterPro" id="IPR004843">
    <property type="entry name" value="Calcineurin-like_PHP_ApaH"/>
</dbReference>
<dbReference type="InterPro" id="IPR029052">
    <property type="entry name" value="Metallo-depent_PP-like"/>
</dbReference>
<dbReference type="InterPro" id="IPR047129">
    <property type="entry name" value="PPA2-like"/>
</dbReference>
<dbReference type="InterPro" id="IPR006186">
    <property type="entry name" value="Ser/Thr-sp_prot-phosphatase"/>
</dbReference>
<dbReference type="PANTHER" id="PTHR45619">
    <property type="entry name" value="SERINE/THREONINE-PROTEIN PHOSPHATASE PP2A-RELATED"/>
    <property type="match status" value="1"/>
</dbReference>
<dbReference type="Pfam" id="PF00149">
    <property type="entry name" value="Metallophos"/>
    <property type="match status" value="1"/>
</dbReference>
<dbReference type="PRINTS" id="PR00114">
    <property type="entry name" value="STPHPHTASE"/>
</dbReference>
<dbReference type="SMART" id="SM00156">
    <property type="entry name" value="PP2Ac"/>
    <property type="match status" value="1"/>
</dbReference>
<dbReference type="SUPFAM" id="SSF56300">
    <property type="entry name" value="Metallo-dependent phosphatases"/>
    <property type="match status" value="1"/>
</dbReference>
<dbReference type="PROSITE" id="PS00125">
    <property type="entry name" value="SER_THR_PHOSPHATASE"/>
    <property type="match status" value="1"/>
</dbReference>
<organism>
    <name type="scientific">Oryza sativa subsp. indica</name>
    <name type="common">Rice</name>
    <dbReference type="NCBI Taxonomy" id="39946"/>
    <lineage>
        <taxon>Eukaryota</taxon>
        <taxon>Viridiplantae</taxon>
        <taxon>Streptophyta</taxon>
        <taxon>Embryophyta</taxon>
        <taxon>Tracheophyta</taxon>
        <taxon>Spermatophyta</taxon>
        <taxon>Magnoliopsida</taxon>
        <taxon>Liliopsida</taxon>
        <taxon>Poales</taxon>
        <taxon>Poaceae</taxon>
        <taxon>BOP clade</taxon>
        <taxon>Oryzoideae</taxon>
        <taxon>Oryzeae</taxon>
        <taxon>Oryzinae</taxon>
        <taxon>Oryza</taxon>
        <taxon>Oryza sativa</taxon>
    </lineage>
</organism>
<comment type="catalytic activity">
    <reaction>
        <text>O-phospho-L-seryl-[protein] + H2O = L-seryl-[protein] + phosphate</text>
        <dbReference type="Rhea" id="RHEA:20629"/>
        <dbReference type="Rhea" id="RHEA-COMP:9863"/>
        <dbReference type="Rhea" id="RHEA-COMP:11604"/>
        <dbReference type="ChEBI" id="CHEBI:15377"/>
        <dbReference type="ChEBI" id="CHEBI:29999"/>
        <dbReference type="ChEBI" id="CHEBI:43474"/>
        <dbReference type="ChEBI" id="CHEBI:83421"/>
        <dbReference type="EC" id="3.1.3.16"/>
    </reaction>
</comment>
<comment type="catalytic activity">
    <reaction>
        <text>O-phospho-L-threonyl-[protein] + H2O = L-threonyl-[protein] + phosphate</text>
        <dbReference type="Rhea" id="RHEA:47004"/>
        <dbReference type="Rhea" id="RHEA-COMP:11060"/>
        <dbReference type="Rhea" id="RHEA-COMP:11605"/>
        <dbReference type="ChEBI" id="CHEBI:15377"/>
        <dbReference type="ChEBI" id="CHEBI:30013"/>
        <dbReference type="ChEBI" id="CHEBI:43474"/>
        <dbReference type="ChEBI" id="CHEBI:61977"/>
        <dbReference type="EC" id="3.1.3.16"/>
    </reaction>
</comment>
<comment type="cofactor">
    <cofactor evidence="1">
        <name>Mn(2+)</name>
        <dbReference type="ChEBI" id="CHEBI:29035"/>
    </cofactor>
    <text evidence="1">Binds 2 manganese ions per subunit.</text>
</comment>
<comment type="subcellular location">
    <subcellularLocation>
        <location evidence="1">Cytoplasm</location>
    </subcellularLocation>
</comment>
<comment type="similarity">
    <text evidence="2">Belongs to the PPP phosphatase family. PP-2A subfamily.</text>
</comment>
<evidence type="ECO:0000250" key="1"/>
<evidence type="ECO:0000305" key="2"/>
<gene>
    <name type="primary">PP2A4</name>
</gene>
<sequence>MEESVGSRGGSGGGGLDAQIEQLMECRPLSETEVKTLCEKAKEILMEESNVQPVKSPVTICGDIHGQFHDLVELFRIGGKCPDTNYLFMGDYVDRGYYSVETVTLLVALKVRYPQRITILRGNHESRQITQVYGFYDECLRKYGSANVWKIFTDLFDYFPLTALVESEIFCLHGGLSPSIDNLDSVRSLDRVQEVPHEGPMCDLLWSDPDDRCGWGISPRGAGYTFGQDISEQFNHSNNLKLVARAHQLVMEGYNWAHEQKVVTIFSAPNYCYRCGNMASILEVDDCRNHTFIQFEPAPRRGEPDVTRRTPDYFL</sequence>